<proteinExistence type="inferred from homology"/>
<evidence type="ECO:0000255" key="1">
    <source>
        <dbReference type="HAMAP-Rule" id="MF_01326"/>
    </source>
</evidence>
<evidence type="ECO:0000305" key="2"/>
<sequence length="111" mass="12637">MKRRSVCVGDTVYVLAGNDKGKQGKVLRCLKDKVVVEGINVRVKNIKRSQENPKGKRINIEAPLHISNVRLSIDNQPARLFVKVREKGRELWNKHSDGSSSLYRSVRERKG</sequence>
<comment type="function">
    <text evidence="1">One of two assembly initiator proteins, it binds directly to the 5'-end of the 23S rRNA, where it nucleates assembly of the 50S subunit.</text>
</comment>
<comment type="function">
    <text evidence="1">One of the proteins that surrounds the polypeptide exit tunnel on the outside of the subunit.</text>
</comment>
<comment type="subunit">
    <text evidence="1">Part of the 50S ribosomal subunit.</text>
</comment>
<comment type="similarity">
    <text evidence="1">Belongs to the universal ribosomal protein uL24 family.</text>
</comment>
<gene>
    <name evidence="1" type="primary">rplX</name>
    <name type="ordered locus">CTA_0566</name>
</gene>
<keyword id="KW-0687">Ribonucleoprotein</keyword>
<keyword id="KW-0689">Ribosomal protein</keyword>
<keyword id="KW-0694">RNA-binding</keyword>
<keyword id="KW-0699">rRNA-binding</keyword>
<organism>
    <name type="scientific">Chlamydia trachomatis serovar A (strain ATCC VR-571B / DSM 19440 / HAR-13)</name>
    <dbReference type="NCBI Taxonomy" id="315277"/>
    <lineage>
        <taxon>Bacteria</taxon>
        <taxon>Pseudomonadati</taxon>
        <taxon>Chlamydiota</taxon>
        <taxon>Chlamydiia</taxon>
        <taxon>Chlamydiales</taxon>
        <taxon>Chlamydiaceae</taxon>
        <taxon>Chlamydia/Chlamydophila group</taxon>
        <taxon>Chlamydia</taxon>
    </lineage>
</organism>
<feature type="chain" id="PRO_0000241583" description="Large ribosomal subunit protein uL24">
    <location>
        <begin position="1"/>
        <end position="111"/>
    </location>
</feature>
<dbReference type="EMBL" id="CP000051">
    <property type="protein sequence ID" value="AAX50792.1"/>
    <property type="molecule type" value="Genomic_DNA"/>
</dbReference>
<dbReference type="RefSeq" id="WP_009871881.1">
    <property type="nucleotide sequence ID" value="NC_007429.1"/>
</dbReference>
<dbReference type="SMR" id="Q3KLI0"/>
<dbReference type="KEGG" id="cta:CTA_0566"/>
<dbReference type="HOGENOM" id="CLU_093315_2_0_0"/>
<dbReference type="Proteomes" id="UP000002532">
    <property type="component" value="Chromosome"/>
</dbReference>
<dbReference type="GO" id="GO:1990904">
    <property type="term" value="C:ribonucleoprotein complex"/>
    <property type="evidence" value="ECO:0007669"/>
    <property type="project" value="UniProtKB-KW"/>
</dbReference>
<dbReference type="GO" id="GO:0005840">
    <property type="term" value="C:ribosome"/>
    <property type="evidence" value="ECO:0007669"/>
    <property type="project" value="UniProtKB-KW"/>
</dbReference>
<dbReference type="GO" id="GO:0019843">
    <property type="term" value="F:rRNA binding"/>
    <property type="evidence" value="ECO:0007669"/>
    <property type="project" value="UniProtKB-UniRule"/>
</dbReference>
<dbReference type="GO" id="GO:0003735">
    <property type="term" value="F:structural constituent of ribosome"/>
    <property type="evidence" value="ECO:0007669"/>
    <property type="project" value="InterPro"/>
</dbReference>
<dbReference type="GO" id="GO:0006412">
    <property type="term" value="P:translation"/>
    <property type="evidence" value="ECO:0007669"/>
    <property type="project" value="UniProtKB-UniRule"/>
</dbReference>
<dbReference type="CDD" id="cd06089">
    <property type="entry name" value="KOW_RPL26"/>
    <property type="match status" value="1"/>
</dbReference>
<dbReference type="Gene3D" id="2.30.30.30">
    <property type="match status" value="1"/>
</dbReference>
<dbReference type="HAMAP" id="MF_01326_B">
    <property type="entry name" value="Ribosomal_uL24_B"/>
    <property type="match status" value="1"/>
</dbReference>
<dbReference type="InterPro" id="IPR005824">
    <property type="entry name" value="KOW"/>
</dbReference>
<dbReference type="InterPro" id="IPR014722">
    <property type="entry name" value="Rib_uL2_dom2"/>
</dbReference>
<dbReference type="InterPro" id="IPR003256">
    <property type="entry name" value="Ribosomal_uL24"/>
</dbReference>
<dbReference type="InterPro" id="IPR005825">
    <property type="entry name" value="Ribosomal_uL24_CS"/>
</dbReference>
<dbReference type="InterPro" id="IPR041988">
    <property type="entry name" value="Ribosomal_uL24_KOW"/>
</dbReference>
<dbReference type="InterPro" id="IPR008991">
    <property type="entry name" value="Translation_prot_SH3-like_sf"/>
</dbReference>
<dbReference type="NCBIfam" id="TIGR01079">
    <property type="entry name" value="rplX_bact"/>
    <property type="match status" value="1"/>
</dbReference>
<dbReference type="PANTHER" id="PTHR12903">
    <property type="entry name" value="MITOCHONDRIAL RIBOSOMAL PROTEIN L24"/>
    <property type="match status" value="1"/>
</dbReference>
<dbReference type="Pfam" id="PF00467">
    <property type="entry name" value="KOW"/>
    <property type="match status" value="1"/>
</dbReference>
<dbReference type="Pfam" id="PF17136">
    <property type="entry name" value="ribosomal_L24"/>
    <property type="match status" value="1"/>
</dbReference>
<dbReference type="SMART" id="SM00739">
    <property type="entry name" value="KOW"/>
    <property type="match status" value="1"/>
</dbReference>
<dbReference type="SUPFAM" id="SSF50104">
    <property type="entry name" value="Translation proteins SH3-like domain"/>
    <property type="match status" value="1"/>
</dbReference>
<dbReference type="PROSITE" id="PS01108">
    <property type="entry name" value="RIBOSOMAL_L24"/>
    <property type="match status" value="1"/>
</dbReference>
<name>RL24_CHLTA</name>
<reference key="1">
    <citation type="journal article" date="2005" name="Infect. Immun.">
        <title>Comparative genomic analysis of Chlamydia trachomatis oculotropic and genitotropic strains.</title>
        <authorList>
            <person name="Carlson J.H."/>
            <person name="Porcella S.F."/>
            <person name="McClarty G."/>
            <person name="Caldwell H.D."/>
        </authorList>
    </citation>
    <scope>NUCLEOTIDE SEQUENCE [LARGE SCALE GENOMIC DNA]</scope>
    <source>
        <strain>ATCC VR-571B / DSM 19440 / HAR-13</strain>
    </source>
</reference>
<protein>
    <recommendedName>
        <fullName evidence="1">Large ribosomal subunit protein uL24</fullName>
    </recommendedName>
    <alternativeName>
        <fullName evidence="2">50S ribosomal protein L24</fullName>
    </alternativeName>
</protein>
<accession>Q3KLI0</accession>